<name>WASC5_DROME</name>
<reference key="1">
    <citation type="journal article" date="2000" name="Science">
        <title>The genome sequence of Drosophila melanogaster.</title>
        <authorList>
            <person name="Adams M.D."/>
            <person name="Celniker S.E."/>
            <person name="Holt R.A."/>
            <person name="Evans C.A."/>
            <person name="Gocayne J.D."/>
            <person name="Amanatides P.G."/>
            <person name="Scherer S.E."/>
            <person name="Li P.W."/>
            <person name="Hoskins R.A."/>
            <person name="Galle R.F."/>
            <person name="George R.A."/>
            <person name="Lewis S.E."/>
            <person name="Richards S."/>
            <person name="Ashburner M."/>
            <person name="Henderson S.N."/>
            <person name="Sutton G.G."/>
            <person name="Wortman J.R."/>
            <person name="Yandell M.D."/>
            <person name="Zhang Q."/>
            <person name="Chen L.X."/>
            <person name="Brandon R.C."/>
            <person name="Rogers Y.-H.C."/>
            <person name="Blazej R.G."/>
            <person name="Champe M."/>
            <person name="Pfeiffer B.D."/>
            <person name="Wan K.H."/>
            <person name="Doyle C."/>
            <person name="Baxter E.G."/>
            <person name="Helt G."/>
            <person name="Nelson C.R."/>
            <person name="Miklos G.L.G."/>
            <person name="Abril J.F."/>
            <person name="Agbayani A."/>
            <person name="An H.-J."/>
            <person name="Andrews-Pfannkoch C."/>
            <person name="Baldwin D."/>
            <person name="Ballew R.M."/>
            <person name="Basu A."/>
            <person name="Baxendale J."/>
            <person name="Bayraktaroglu L."/>
            <person name="Beasley E.M."/>
            <person name="Beeson K.Y."/>
            <person name="Benos P.V."/>
            <person name="Berman B.P."/>
            <person name="Bhandari D."/>
            <person name="Bolshakov S."/>
            <person name="Borkova D."/>
            <person name="Botchan M.R."/>
            <person name="Bouck J."/>
            <person name="Brokstein P."/>
            <person name="Brottier P."/>
            <person name="Burtis K.C."/>
            <person name="Busam D.A."/>
            <person name="Butler H."/>
            <person name="Cadieu E."/>
            <person name="Center A."/>
            <person name="Chandra I."/>
            <person name="Cherry J.M."/>
            <person name="Cawley S."/>
            <person name="Dahlke C."/>
            <person name="Davenport L.B."/>
            <person name="Davies P."/>
            <person name="de Pablos B."/>
            <person name="Delcher A."/>
            <person name="Deng Z."/>
            <person name="Mays A.D."/>
            <person name="Dew I."/>
            <person name="Dietz S.M."/>
            <person name="Dodson K."/>
            <person name="Doup L.E."/>
            <person name="Downes M."/>
            <person name="Dugan-Rocha S."/>
            <person name="Dunkov B.C."/>
            <person name="Dunn P."/>
            <person name="Durbin K.J."/>
            <person name="Evangelista C.C."/>
            <person name="Ferraz C."/>
            <person name="Ferriera S."/>
            <person name="Fleischmann W."/>
            <person name="Fosler C."/>
            <person name="Gabrielian A.E."/>
            <person name="Garg N.S."/>
            <person name="Gelbart W.M."/>
            <person name="Glasser K."/>
            <person name="Glodek A."/>
            <person name="Gong F."/>
            <person name="Gorrell J.H."/>
            <person name="Gu Z."/>
            <person name="Guan P."/>
            <person name="Harris M."/>
            <person name="Harris N.L."/>
            <person name="Harvey D.A."/>
            <person name="Heiman T.J."/>
            <person name="Hernandez J.R."/>
            <person name="Houck J."/>
            <person name="Hostin D."/>
            <person name="Houston K.A."/>
            <person name="Howland T.J."/>
            <person name="Wei M.-H."/>
            <person name="Ibegwam C."/>
            <person name="Jalali M."/>
            <person name="Kalush F."/>
            <person name="Karpen G.H."/>
            <person name="Ke Z."/>
            <person name="Kennison J.A."/>
            <person name="Ketchum K.A."/>
            <person name="Kimmel B.E."/>
            <person name="Kodira C.D."/>
            <person name="Kraft C.L."/>
            <person name="Kravitz S."/>
            <person name="Kulp D."/>
            <person name="Lai Z."/>
            <person name="Lasko P."/>
            <person name="Lei Y."/>
            <person name="Levitsky A.A."/>
            <person name="Li J.H."/>
            <person name="Li Z."/>
            <person name="Liang Y."/>
            <person name="Lin X."/>
            <person name="Liu X."/>
            <person name="Mattei B."/>
            <person name="McIntosh T.C."/>
            <person name="McLeod M.P."/>
            <person name="McPherson D."/>
            <person name="Merkulov G."/>
            <person name="Milshina N.V."/>
            <person name="Mobarry C."/>
            <person name="Morris J."/>
            <person name="Moshrefi A."/>
            <person name="Mount S.M."/>
            <person name="Moy M."/>
            <person name="Murphy B."/>
            <person name="Murphy L."/>
            <person name="Muzny D.M."/>
            <person name="Nelson D.L."/>
            <person name="Nelson D.R."/>
            <person name="Nelson K.A."/>
            <person name="Nixon K."/>
            <person name="Nusskern D.R."/>
            <person name="Pacleb J.M."/>
            <person name="Palazzolo M."/>
            <person name="Pittman G.S."/>
            <person name="Pan S."/>
            <person name="Pollard J."/>
            <person name="Puri V."/>
            <person name="Reese M.G."/>
            <person name="Reinert K."/>
            <person name="Remington K."/>
            <person name="Saunders R.D.C."/>
            <person name="Scheeler F."/>
            <person name="Shen H."/>
            <person name="Shue B.C."/>
            <person name="Siden-Kiamos I."/>
            <person name="Simpson M."/>
            <person name="Skupski M.P."/>
            <person name="Smith T.J."/>
            <person name="Spier E."/>
            <person name="Spradling A.C."/>
            <person name="Stapleton M."/>
            <person name="Strong R."/>
            <person name="Sun E."/>
            <person name="Svirskas R."/>
            <person name="Tector C."/>
            <person name="Turner R."/>
            <person name="Venter E."/>
            <person name="Wang A.H."/>
            <person name="Wang X."/>
            <person name="Wang Z.-Y."/>
            <person name="Wassarman D.A."/>
            <person name="Weinstock G.M."/>
            <person name="Weissenbach J."/>
            <person name="Williams S.M."/>
            <person name="Woodage T."/>
            <person name="Worley K.C."/>
            <person name="Wu D."/>
            <person name="Yang S."/>
            <person name="Yao Q.A."/>
            <person name="Ye J."/>
            <person name="Yeh R.-F."/>
            <person name="Zaveri J.S."/>
            <person name="Zhan M."/>
            <person name="Zhang G."/>
            <person name="Zhao Q."/>
            <person name="Zheng L."/>
            <person name="Zheng X.H."/>
            <person name="Zhong F.N."/>
            <person name="Zhong W."/>
            <person name="Zhou X."/>
            <person name="Zhu S.C."/>
            <person name="Zhu X."/>
            <person name="Smith H.O."/>
            <person name="Gibbs R.A."/>
            <person name="Myers E.W."/>
            <person name="Rubin G.M."/>
            <person name="Venter J.C."/>
        </authorList>
    </citation>
    <scope>NUCLEOTIDE SEQUENCE [LARGE SCALE GENOMIC DNA]</scope>
    <source>
        <strain>Berkeley</strain>
    </source>
</reference>
<reference key="2">
    <citation type="journal article" date="2002" name="Genome Biol.">
        <title>Annotation of the Drosophila melanogaster euchromatic genome: a systematic review.</title>
        <authorList>
            <person name="Misra S."/>
            <person name="Crosby M.A."/>
            <person name="Mungall C.J."/>
            <person name="Matthews B.B."/>
            <person name="Campbell K.S."/>
            <person name="Hradecky P."/>
            <person name="Huang Y."/>
            <person name="Kaminker J.S."/>
            <person name="Millburn G.H."/>
            <person name="Prochnik S.E."/>
            <person name="Smith C.D."/>
            <person name="Tupy J.L."/>
            <person name="Whitfield E.J."/>
            <person name="Bayraktaroglu L."/>
            <person name="Berman B.P."/>
            <person name="Bettencourt B.R."/>
            <person name="Celniker S.E."/>
            <person name="de Grey A.D.N.J."/>
            <person name="Drysdale R.A."/>
            <person name="Harris N.L."/>
            <person name="Richter J."/>
            <person name="Russo S."/>
            <person name="Schroeder A.J."/>
            <person name="Shu S.Q."/>
            <person name="Stapleton M."/>
            <person name="Yamada C."/>
            <person name="Ashburner M."/>
            <person name="Gelbart W.M."/>
            <person name="Rubin G.M."/>
            <person name="Lewis S.E."/>
        </authorList>
    </citation>
    <scope>GENOME REANNOTATION</scope>
    <source>
        <strain>Berkeley</strain>
    </source>
</reference>
<reference key="3">
    <citation type="submission" date="2010-01" db="EMBL/GenBank/DDBJ databases">
        <authorList>
            <person name="Stapleton M."/>
            <person name="Carlson J."/>
            <person name="Frise E."/>
            <person name="Kapadia B."/>
            <person name="Park S."/>
            <person name="Wan K."/>
            <person name="Yu C."/>
            <person name="Celniker S."/>
            <person name="Booth B."/>
        </authorList>
    </citation>
    <scope>NUCLEOTIDE SEQUENCE [LARGE SCALE MRNA]</scope>
    <source>
        <strain>Berkeley</strain>
    </source>
</reference>
<reference key="4">
    <citation type="journal article" date="2010" name="Proc. Natl. Acad. Sci. U.S.A.">
        <title>WASH and WAVE actin regulators of the Wiskott-Aldrich syndrome protein (WASP) family are controlled by analogous structurally related complexes.</title>
        <authorList>
            <person name="Jia D."/>
            <person name="Gomez T.S."/>
            <person name="Metlagel Z."/>
            <person name="Umetani J."/>
            <person name="Otwinowski Z."/>
            <person name="Rosen M.K."/>
            <person name="Billadeau D.D."/>
        </authorList>
    </citation>
    <scope>SUBUNIT</scope>
</reference>
<reference key="5">
    <citation type="journal article" date="2015" name="Mol. Biol. Cell">
        <title>Wash functions downstream of Rho1 GTPase in a subset of Drosophila immune cell developmental migrations.</title>
        <authorList>
            <person name="Verboon J.M."/>
            <person name="Rahe T.K."/>
            <person name="Rodriguez-Mesa E."/>
            <person name="Parkhurst S.M."/>
        </authorList>
    </citation>
    <scope>FUNCTION</scope>
</reference>
<dbReference type="EMBL" id="AE014296">
    <property type="protein sequence ID" value="AAF49534.1"/>
    <property type="molecule type" value="Genomic_DNA"/>
</dbReference>
<dbReference type="EMBL" id="AE014296">
    <property type="protein sequence ID" value="ACZ94725.1"/>
    <property type="molecule type" value="Genomic_DNA"/>
</dbReference>
<dbReference type="EMBL" id="BT029280">
    <property type="protein sequence ID" value="ABK30917.1"/>
    <property type="molecule type" value="mRNA"/>
</dbReference>
<dbReference type="EMBL" id="BT120162">
    <property type="protein sequence ID" value="ADB91410.1"/>
    <property type="molecule type" value="mRNA"/>
</dbReference>
<dbReference type="RefSeq" id="NP_001163454.1">
    <property type="nucleotide sequence ID" value="NM_001169983.2"/>
</dbReference>
<dbReference type="RefSeq" id="NP_648840.1">
    <property type="nucleotide sequence ID" value="NM_140583.4"/>
</dbReference>
<dbReference type="BioGRID" id="65075">
    <property type="interactions" value="11"/>
</dbReference>
<dbReference type="ComplexPortal" id="CPX-2562">
    <property type="entry name" value="WASH complex"/>
</dbReference>
<dbReference type="FunCoup" id="Q9VUY8">
    <property type="interactions" value="1740"/>
</dbReference>
<dbReference type="IntAct" id="Q9VUY8">
    <property type="interactions" value="2"/>
</dbReference>
<dbReference type="STRING" id="7227.FBpp0291126"/>
<dbReference type="GlyGen" id="Q9VUY8">
    <property type="glycosylation" value="1 site"/>
</dbReference>
<dbReference type="PaxDb" id="7227-FBpp0075208"/>
<dbReference type="DNASU" id="39766"/>
<dbReference type="EnsemblMetazoa" id="FBtr0075452">
    <property type="protein sequence ID" value="FBpp0075208"/>
    <property type="gene ID" value="FBgn0036571"/>
</dbReference>
<dbReference type="EnsemblMetazoa" id="FBtr0301912">
    <property type="protein sequence ID" value="FBpp0291126"/>
    <property type="gene ID" value="FBgn0036571"/>
</dbReference>
<dbReference type="GeneID" id="39766"/>
<dbReference type="KEGG" id="dme:Dmel_CG12272"/>
<dbReference type="UCSC" id="CG12272-RA">
    <property type="organism name" value="d. melanogaster"/>
</dbReference>
<dbReference type="AGR" id="FB:FBgn0036571"/>
<dbReference type="CTD" id="39766"/>
<dbReference type="FlyBase" id="FBgn0036571">
    <property type="gene designation" value="Strump"/>
</dbReference>
<dbReference type="VEuPathDB" id="VectorBase:FBgn0036571"/>
<dbReference type="eggNOG" id="KOG3666">
    <property type="taxonomic scope" value="Eukaryota"/>
</dbReference>
<dbReference type="GeneTree" id="ENSGT00390000011137"/>
<dbReference type="HOGENOM" id="CLU_004021_1_0_1"/>
<dbReference type="InParanoid" id="Q9VUY8"/>
<dbReference type="OMA" id="FFPDNWV"/>
<dbReference type="OrthoDB" id="565118at2759"/>
<dbReference type="PhylomeDB" id="Q9VUY8"/>
<dbReference type="SignaLink" id="Q9VUY8"/>
<dbReference type="BioGRID-ORCS" id="39766">
    <property type="hits" value="0 hits in 1 CRISPR screen"/>
</dbReference>
<dbReference type="ChiTaRS" id="Strumpellin">
    <property type="organism name" value="fly"/>
</dbReference>
<dbReference type="GenomeRNAi" id="39766"/>
<dbReference type="PRO" id="PR:Q9VUY8"/>
<dbReference type="Proteomes" id="UP000000803">
    <property type="component" value="Chromosome 3L"/>
</dbReference>
<dbReference type="Bgee" id="FBgn0036571">
    <property type="expression patterns" value="Expressed in embryonic/larval hemocyte (Drosophila) and 44 other cell types or tissues"/>
</dbReference>
<dbReference type="ExpressionAtlas" id="Q9VUY8">
    <property type="expression patterns" value="baseline and differential"/>
</dbReference>
<dbReference type="GO" id="GO:0005769">
    <property type="term" value="C:early endosome"/>
    <property type="evidence" value="ECO:0007669"/>
    <property type="project" value="UniProtKB-SubCell"/>
</dbReference>
<dbReference type="GO" id="GO:0005768">
    <property type="term" value="C:endosome"/>
    <property type="evidence" value="ECO:0000318"/>
    <property type="project" value="GO_Central"/>
</dbReference>
<dbReference type="GO" id="GO:0005654">
    <property type="term" value="C:nucleoplasm"/>
    <property type="evidence" value="ECO:0000314"/>
    <property type="project" value="FlyBase"/>
</dbReference>
<dbReference type="GO" id="GO:0071203">
    <property type="term" value="C:WASH complex"/>
    <property type="evidence" value="ECO:0000314"/>
    <property type="project" value="UniProtKB"/>
</dbReference>
<dbReference type="GO" id="GO:0030041">
    <property type="term" value="P:actin filament polymerization"/>
    <property type="evidence" value="ECO:0000318"/>
    <property type="project" value="GO_Central"/>
</dbReference>
<dbReference type="GO" id="GO:0140285">
    <property type="term" value="P:endosome fission"/>
    <property type="evidence" value="ECO:0000318"/>
    <property type="project" value="GO_Central"/>
</dbReference>
<dbReference type="GO" id="GO:0007032">
    <property type="term" value="P:endosome organization"/>
    <property type="evidence" value="ECO:0000318"/>
    <property type="project" value="GO_Central"/>
</dbReference>
<dbReference type="GO" id="GO:0140591">
    <property type="term" value="P:nuclear envelope budding"/>
    <property type="evidence" value="ECO:0000315"/>
    <property type="project" value="FlyBase"/>
</dbReference>
<dbReference type="GO" id="GO:0045785">
    <property type="term" value="P:positive regulation of cell adhesion"/>
    <property type="evidence" value="ECO:0000315"/>
    <property type="project" value="FlyBase"/>
</dbReference>
<dbReference type="GO" id="GO:0015031">
    <property type="term" value="P:protein transport"/>
    <property type="evidence" value="ECO:0007669"/>
    <property type="project" value="UniProtKB-KW"/>
</dbReference>
<dbReference type="GO" id="GO:0051125">
    <property type="term" value="P:regulation of actin nucleation"/>
    <property type="evidence" value="ECO:0000318"/>
    <property type="project" value="GO_Central"/>
</dbReference>
<dbReference type="InterPro" id="IPR019393">
    <property type="entry name" value="WASH_strumpellin"/>
</dbReference>
<dbReference type="PANTHER" id="PTHR15691">
    <property type="entry name" value="WASH COMPLEX SUBUNIT 5"/>
    <property type="match status" value="1"/>
</dbReference>
<dbReference type="PANTHER" id="PTHR15691:SF6">
    <property type="entry name" value="WASH COMPLEX SUBUNIT 5"/>
    <property type="match status" value="1"/>
</dbReference>
<dbReference type="Pfam" id="PF10266">
    <property type="entry name" value="Strumpellin"/>
    <property type="match status" value="1"/>
</dbReference>
<accession>Q9VUY8</accession>
<accession>A0AVW2</accession>
<accession>D3DMJ6</accession>
<gene>
    <name evidence="6" type="primary">Strump</name>
    <name evidence="6" type="ORF">CG12272</name>
</gene>
<evidence type="ECO:0000250" key="1">
    <source>
        <dbReference type="UniProtKB" id="Q12768"/>
    </source>
</evidence>
<evidence type="ECO:0000250" key="2">
    <source>
        <dbReference type="UniProtKB" id="Q6DIP9"/>
    </source>
</evidence>
<evidence type="ECO:0000269" key="3">
    <source>
    </source>
</evidence>
<evidence type="ECO:0000269" key="4">
    <source>
    </source>
</evidence>
<evidence type="ECO:0000305" key="5"/>
<evidence type="ECO:0000312" key="6">
    <source>
        <dbReference type="FlyBase" id="FBgn0036571"/>
    </source>
</evidence>
<feature type="chain" id="PRO_0000390953" description="WASH complex subunit homolog 5">
    <location>
        <begin position="1"/>
        <end position="1191"/>
    </location>
</feature>
<feature type="sequence conflict" description="In Ref. 3; ABK30917." evidence="5" ref="3">
    <original>V</original>
    <variation>F</variation>
    <location>
        <position position="1120"/>
    </location>
</feature>
<proteinExistence type="evidence at protein level"/>
<keyword id="KW-0967">Endosome</keyword>
<keyword id="KW-0653">Protein transport</keyword>
<keyword id="KW-1185">Reference proteome</keyword>
<keyword id="KW-0813">Transport</keyword>
<comment type="function">
    <text evidence="2 4">Acts at least in part as component of the WASH complex which may regulate wash nucleation-promoting factor (NPF) activity and is required for its membrane targeting during endosomal sorting (By similarity). During embryogenesis, not involved in the wash-dependent developmental migration of hemocytes anteriorly from the tail (PubMed:25739458).</text>
</comment>
<comment type="subunit">
    <text evidence="3">Component of the WASH complex.</text>
</comment>
<comment type="subcellular location">
    <subcellularLocation>
        <location evidence="5">Early endosome</location>
    </subcellularLocation>
</comment>
<comment type="similarity">
    <text evidence="5">Belongs to the strumpellin family.</text>
</comment>
<sequence>MSFLDDNNACGQNLLNIVSVGNSIIAEILRLKDYVPSIYRLDNKADKAKYGELILDFSYFKIAEDHERRIEQSPELTELDDEARAQLPLITRFYLAFQSIHHYASDLQQYIEELNTGYYIQQTLETVLQEEEGRQLLCESLYLFGVILLMVDFHIPGDVRERLLIAYYRYSGGDATPSGDESNIHDVCLLLRSTGYVHPSIAAKVLGLGGKQAGARAASLVVPRYPEAYFSRFRFDENFVDLVVARLRCDDIYNQLNLYPHPAHRSTALSTQAAMLYVCLYFCPQVLHSQGSQMREIVDKFFCDNWTISVYMGMTVNLVDAWLDFKAARSAIENVISPPAIKALCQQQKEQLGKITQKTQEIVREGVLNDNFVLEHANKIIHLMRQSNVLLRWFCLHTSREVFIFAHTATLTGQVQKCVLHELQFNRNTLYNLLLNCSQMELSVREFLAEIQQTKEERWTKSREEAMQRLNELSEAFAGSRPLSKIEQNPQLQQWFGEVAGRLQKLELSRPQKSGRLIIQVMQALDDVQEYHNLHSNMLVKQQLQETRDMLNQMAQLINLKEDIEIHIQMITDFSYAWHLLQFDFTPPMQEHIKRQPQAVIGIRAVFLKLASTLEVPLMRINQARSEDLVSVSNYYSTELANFLRRVLQIVPETMFSILAKIIYLLTNVIKEFPTKVEKERLKDYAQFEERAKVAQLTNSIAVFTKGILMMKTTLVGVIELDPKQLLEDGIRKELVNHLANAYNLGLIFTPEKGKTPVQLLQQKLQALAKTIEGYRRSFEYIEDYLRVQGLRILLEESQRIINYNVEKECNAFLRNKVQEFQSEHQSQIIPIPNFPPLLGDPSNNFIGRLAHEILRCTDPKQTIFLDLKSTWYEKKAPHQEVLAGSGFFEILREALAPAGMVGLERLYAHMLADELKRNLERLQRNLTSDRMWVDTLAALTRELEARDFPTPEVSKQPLKYYQAYTQRWLKVWPTLLDWVLCIGQKQLLRREIAGELSFSSKCDAKLLENTADTLNKALLLELSLSKDLCDEKGVVMLTELQETLLYTGNFEPLEQVFLITKNTHNMALFMFLFTIAHLGRMQHSTITDCLLPKSAKDNIDNVPFIVGLVTILQQFHKNVKMLYISYMSQYVVTVSEAQLLDKEILGPEVVTALHFLLAFIRIARLPLGVLEQRIPNIILSEYEYLSTLLK</sequence>
<protein>
    <recommendedName>
        <fullName evidence="1">WASH complex subunit homolog 5</fullName>
    </recommendedName>
    <alternativeName>
        <fullName evidence="5">WASH complex subunit strumpellin homolog</fullName>
    </alternativeName>
</protein>
<organism>
    <name type="scientific">Drosophila melanogaster</name>
    <name type="common">Fruit fly</name>
    <dbReference type="NCBI Taxonomy" id="7227"/>
    <lineage>
        <taxon>Eukaryota</taxon>
        <taxon>Metazoa</taxon>
        <taxon>Ecdysozoa</taxon>
        <taxon>Arthropoda</taxon>
        <taxon>Hexapoda</taxon>
        <taxon>Insecta</taxon>
        <taxon>Pterygota</taxon>
        <taxon>Neoptera</taxon>
        <taxon>Endopterygota</taxon>
        <taxon>Diptera</taxon>
        <taxon>Brachycera</taxon>
        <taxon>Muscomorpha</taxon>
        <taxon>Ephydroidea</taxon>
        <taxon>Drosophilidae</taxon>
        <taxon>Drosophila</taxon>
        <taxon>Sophophora</taxon>
    </lineage>
</organism>